<evidence type="ECO:0000255" key="1">
    <source>
        <dbReference type="HAMAP-Rule" id="MF_00907"/>
    </source>
</evidence>
<comment type="function">
    <text evidence="1">Required for optimal enterobactin synthesis. Acts as a proofreading enzyme that prevents EntB misacylation by hydrolyzing the thioester bound existing between EntB and wrongly charged molecules.</text>
</comment>
<comment type="pathway">
    <text evidence="1">Siderophore biosynthesis; enterobactin biosynthesis.</text>
</comment>
<comment type="subunit">
    <text evidence="1">Homotetramer. Dimer of dimers. Interacts specifically with the aryl carrier protein (ArCP) domain of EntB.</text>
</comment>
<comment type="subcellular location">
    <subcellularLocation>
        <location evidence="1">Cytoplasm</location>
    </subcellularLocation>
</comment>
<comment type="similarity">
    <text evidence="1">Belongs to the thioesterase PaaI family.</text>
</comment>
<name>ENTH_SALPB</name>
<sequence length="137" mass="14925">MIWKRHLTLDELNATSQNTLVAHLGIVYTRLGDDVLEAEMPVDARTHQPFGLLHGGASAALAETLGSMAGYLMTRDGQCVVGTELNATHHRAVSQGKVRGVCLPLHLGRQNQSWEITLFDEQGRRCCTCRLGTAVMG</sequence>
<proteinExistence type="inferred from homology"/>
<protein>
    <recommendedName>
        <fullName evidence="1">Proofreading thioesterase EntH</fullName>
        <ecNumber evidence="1">3.1.2.-</ecNumber>
    </recommendedName>
    <alternativeName>
        <fullName evidence="1">Enterobactin synthase component H</fullName>
    </alternativeName>
</protein>
<organism>
    <name type="scientific">Salmonella paratyphi B (strain ATCC BAA-1250 / SPB7)</name>
    <dbReference type="NCBI Taxonomy" id="1016998"/>
    <lineage>
        <taxon>Bacteria</taxon>
        <taxon>Pseudomonadati</taxon>
        <taxon>Pseudomonadota</taxon>
        <taxon>Gammaproteobacteria</taxon>
        <taxon>Enterobacterales</taxon>
        <taxon>Enterobacteriaceae</taxon>
        <taxon>Salmonella</taxon>
    </lineage>
</organism>
<dbReference type="EC" id="3.1.2.-" evidence="1"/>
<dbReference type="EMBL" id="CP000886">
    <property type="protein sequence ID" value="ABX68328.1"/>
    <property type="molecule type" value="Genomic_DNA"/>
</dbReference>
<dbReference type="RefSeq" id="WP_000637966.1">
    <property type="nucleotide sequence ID" value="NC_010102.1"/>
</dbReference>
<dbReference type="SMR" id="A9MVB6"/>
<dbReference type="KEGG" id="spq:SPAB_02964"/>
<dbReference type="PATRIC" id="fig|1016998.12.peg.2795"/>
<dbReference type="HOGENOM" id="CLU_089876_13_1_6"/>
<dbReference type="BioCyc" id="SENT1016998:SPAB_RS12075-MONOMER"/>
<dbReference type="UniPathway" id="UPA00017"/>
<dbReference type="Proteomes" id="UP000008556">
    <property type="component" value="Chromosome"/>
</dbReference>
<dbReference type="GO" id="GO:0005829">
    <property type="term" value="C:cytosol"/>
    <property type="evidence" value="ECO:0007669"/>
    <property type="project" value="TreeGrafter"/>
</dbReference>
<dbReference type="GO" id="GO:0061522">
    <property type="term" value="F:1,4-dihydroxy-2-naphthoyl-CoA thioesterase activity"/>
    <property type="evidence" value="ECO:0007669"/>
    <property type="project" value="TreeGrafter"/>
</dbReference>
<dbReference type="GO" id="GO:0009239">
    <property type="term" value="P:enterobactin biosynthetic process"/>
    <property type="evidence" value="ECO:0007669"/>
    <property type="project" value="UniProtKB-UniRule"/>
</dbReference>
<dbReference type="CDD" id="cd03443">
    <property type="entry name" value="PaaI_thioesterase"/>
    <property type="match status" value="1"/>
</dbReference>
<dbReference type="FunFam" id="3.10.129.10:FF:000002">
    <property type="entry name" value="1,4-dihydroxy-2-naphthoyl-CoA hydrolase"/>
    <property type="match status" value="1"/>
</dbReference>
<dbReference type="Gene3D" id="3.10.129.10">
    <property type="entry name" value="Hotdog Thioesterase"/>
    <property type="match status" value="1"/>
</dbReference>
<dbReference type="HAMAP" id="MF_00907">
    <property type="entry name" value="Thioesterase_EntH"/>
    <property type="match status" value="1"/>
</dbReference>
<dbReference type="InterPro" id="IPR029069">
    <property type="entry name" value="HotDog_dom_sf"/>
</dbReference>
<dbReference type="InterPro" id="IPR003736">
    <property type="entry name" value="PAAI_dom"/>
</dbReference>
<dbReference type="InterPro" id="IPR026576">
    <property type="entry name" value="Thioesterase_EntH"/>
</dbReference>
<dbReference type="InterPro" id="IPR006683">
    <property type="entry name" value="Thioestr_dom"/>
</dbReference>
<dbReference type="NCBIfam" id="NF007607">
    <property type="entry name" value="PRK10254.1"/>
    <property type="match status" value="1"/>
</dbReference>
<dbReference type="NCBIfam" id="TIGR00369">
    <property type="entry name" value="unchar_dom_1"/>
    <property type="match status" value="1"/>
</dbReference>
<dbReference type="PANTHER" id="PTHR43240">
    <property type="entry name" value="1,4-DIHYDROXY-2-NAPHTHOYL-COA THIOESTERASE 1"/>
    <property type="match status" value="1"/>
</dbReference>
<dbReference type="PANTHER" id="PTHR43240:SF9">
    <property type="entry name" value="PROOFREADING THIOESTERASE ENTH"/>
    <property type="match status" value="1"/>
</dbReference>
<dbReference type="Pfam" id="PF03061">
    <property type="entry name" value="4HBT"/>
    <property type="match status" value="1"/>
</dbReference>
<dbReference type="SUPFAM" id="SSF54637">
    <property type="entry name" value="Thioesterase/thiol ester dehydrase-isomerase"/>
    <property type="match status" value="1"/>
</dbReference>
<gene>
    <name evidence="1" type="primary">entH</name>
    <name type="ordered locus">SPAB_02964</name>
</gene>
<reference key="1">
    <citation type="submission" date="2007-11" db="EMBL/GenBank/DDBJ databases">
        <authorList>
            <consortium name="The Salmonella enterica serovar Paratyphi B Genome Sequencing Project"/>
            <person name="McClelland M."/>
            <person name="Sanderson E.K."/>
            <person name="Porwollik S."/>
            <person name="Spieth J."/>
            <person name="Clifton W.S."/>
            <person name="Fulton R."/>
            <person name="Cordes M."/>
            <person name="Wollam A."/>
            <person name="Shah N."/>
            <person name="Pepin K."/>
            <person name="Bhonagiri V."/>
            <person name="Nash W."/>
            <person name="Johnson M."/>
            <person name="Thiruvilangam P."/>
            <person name="Wilson R."/>
        </authorList>
    </citation>
    <scope>NUCLEOTIDE SEQUENCE [LARGE SCALE GENOMIC DNA]</scope>
    <source>
        <strain>ATCC BAA-1250 / SPB7</strain>
    </source>
</reference>
<accession>A9MVB6</accession>
<feature type="chain" id="PRO_0000413874" description="Proofreading thioesterase EntH">
    <location>
        <begin position="1"/>
        <end position="137"/>
    </location>
</feature>
<feature type="active site" description="Nucleophile or proton acceptor" evidence="1">
    <location>
        <position position="63"/>
    </location>
</feature>
<keyword id="KW-0963">Cytoplasm</keyword>
<keyword id="KW-0378">Hydrolase</keyword>